<feature type="chain" id="PRO_0000241599" description="Large ribosomal subunit protein uL24">
    <location>
        <begin position="1"/>
        <end position="104"/>
    </location>
</feature>
<accession>Q6CZY1</accession>
<sequence>MAAKIRRDDEVIVLTGKDKGKRGKVKNVLSASKVIVEGINLVKKHQKPVPALNQPGGIVEKEAAIQVSNLAIFNAATGKADRVGFRFEDGKKVRFFKSNSETIK</sequence>
<name>RL24_PECAS</name>
<evidence type="ECO:0000255" key="1">
    <source>
        <dbReference type="HAMAP-Rule" id="MF_01326"/>
    </source>
</evidence>
<evidence type="ECO:0000305" key="2"/>
<organism>
    <name type="scientific">Pectobacterium atrosepticum (strain SCRI 1043 / ATCC BAA-672)</name>
    <name type="common">Erwinia carotovora subsp. atroseptica</name>
    <dbReference type="NCBI Taxonomy" id="218491"/>
    <lineage>
        <taxon>Bacteria</taxon>
        <taxon>Pseudomonadati</taxon>
        <taxon>Pseudomonadota</taxon>
        <taxon>Gammaproteobacteria</taxon>
        <taxon>Enterobacterales</taxon>
        <taxon>Pectobacteriaceae</taxon>
        <taxon>Pectobacterium</taxon>
    </lineage>
</organism>
<proteinExistence type="inferred from homology"/>
<keyword id="KW-1185">Reference proteome</keyword>
<keyword id="KW-0687">Ribonucleoprotein</keyword>
<keyword id="KW-0689">Ribosomal protein</keyword>
<keyword id="KW-0694">RNA-binding</keyword>
<keyword id="KW-0699">rRNA-binding</keyword>
<gene>
    <name evidence="1" type="primary">rplX</name>
    <name type="ordered locus">ECA4020</name>
</gene>
<dbReference type="EMBL" id="BX950851">
    <property type="protein sequence ID" value="CAG76917.1"/>
    <property type="molecule type" value="Genomic_DNA"/>
</dbReference>
<dbReference type="RefSeq" id="WP_005970267.1">
    <property type="nucleotide sequence ID" value="NC_004547.2"/>
</dbReference>
<dbReference type="SMR" id="Q6CZY1"/>
<dbReference type="STRING" id="218491.ECA4020"/>
<dbReference type="GeneID" id="93391969"/>
<dbReference type="KEGG" id="eca:ECA4020"/>
<dbReference type="eggNOG" id="COG0198">
    <property type="taxonomic scope" value="Bacteria"/>
</dbReference>
<dbReference type="HOGENOM" id="CLU_093315_2_2_6"/>
<dbReference type="OrthoDB" id="9807419at2"/>
<dbReference type="Proteomes" id="UP000007966">
    <property type="component" value="Chromosome"/>
</dbReference>
<dbReference type="GO" id="GO:1990904">
    <property type="term" value="C:ribonucleoprotein complex"/>
    <property type="evidence" value="ECO:0007669"/>
    <property type="project" value="UniProtKB-KW"/>
</dbReference>
<dbReference type="GO" id="GO:0005840">
    <property type="term" value="C:ribosome"/>
    <property type="evidence" value="ECO:0007669"/>
    <property type="project" value="UniProtKB-KW"/>
</dbReference>
<dbReference type="GO" id="GO:0019843">
    <property type="term" value="F:rRNA binding"/>
    <property type="evidence" value="ECO:0007669"/>
    <property type="project" value="UniProtKB-UniRule"/>
</dbReference>
<dbReference type="GO" id="GO:0003735">
    <property type="term" value="F:structural constituent of ribosome"/>
    <property type="evidence" value="ECO:0007669"/>
    <property type="project" value="InterPro"/>
</dbReference>
<dbReference type="GO" id="GO:0006412">
    <property type="term" value="P:translation"/>
    <property type="evidence" value="ECO:0007669"/>
    <property type="project" value="UniProtKB-UniRule"/>
</dbReference>
<dbReference type="CDD" id="cd06089">
    <property type="entry name" value="KOW_RPL26"/>
    <property type="match status" value="1"/>
</dbReference>
<dbReference type="FunFam" id="2.30.30.30:FF:000004">
    <property type="entry name" value="50S ribosomal protein L24"/>
    <property type="match status" value="1"/>
</dbReference>
<dbReference type="Gene3D" id="2.30.30.30">
    <property type="match status" value="1"/>
</dbReference>
<dbReference type="HAMAP" id="MF_01326_B">
    <property type="entry name" value="Ribosomal_uL24_B"/>
    <property type="match status" value="1"/>
</dbReference>
<dbReference type="InterPro" id="IPR005824">
    <property type="entry name" value="KOW"/>
</dbReference>
<dbReference type="InterPro" id="IPR014722">
    <property type="entry name" value="Rib_uL2_dom2"/>
</dbReference>
<dbReference type="InterPro" id="IPR003256">
    <property type="entry name" value="Ribosomal_uL24"/>
</dbReference>
<dbReference type="InterPro" id="IPR005825">
    <property type="entry name" value="Ribosomal_uL24_CS"/>
</dbReference>
<dbReference type="InterPro" id="IPR041988">
    <property type="entry name" value="Ribosomal_uL24_KOW"/>
</dbReference>
<dbReference type="InterPro" id="IPR008991">
    <property type="entry name" value="Translation_prot_SH3-like_sf"/>
</dbReference>
<dbReference type="NCBIfam" id="TIGR01079">
    <property type="entry name" value="rplX_bact"/>
    <property type="match status" value="1"/>
</dbReference>
<dbReference type="PANTHER" id="PTHR12903">
    <property type="entry name" value="MITOCHONDRIAL RIBOSOMAL PROTEIN L24"/>
    <property type="match status" value="1"/>
</dbReference>
<dbReference type="Pfam" id="PF00467">
    <property type="entry name" value="KOW"/>
    <property type="match status" value="1"/>
</dbReference>
<dbReference type="Pfam" id="PF17136">
    <property type="entry name" value="ribosomal_L24"/>
    <property type="match status" value="1"/>
</dbReference>
<dbReference type="SMART" id="SM00739">
    <property type="entry name" value="KOW"/>
    <property type="match status" value="1"/>
</dbReference>
<dbReference type="SUPFAM" id="SSF50104">
    <property type="entry name" value="Translation proteins SH3-like domain"/>
    <property type="match status" value="1"/>
</dbReference>
<dbReference type="PROSITE" id="PS01108">
    <property type="entry name" value="RIBOSOMAL_L24"/>
    <property type="match status" value="1"/>
</dbReference>
<comment type="function">
    <text evidence="1">One of two assembly initiator proteins, it binds directly to the 5'-end of the 23S rRNA, where it nucleates assembly of the 50S subunit.</text>
</comment>
<comment type="function">
    <text evidence="1">One of the proteins that surrounds the polypeptide exit tunnel on the outside of the subunit.</text>
</comment>
<comment type="subunit">
    <text evidence="1">Part of the 50S ribosomal subunit.</text>
</comment>
<comment type="similarity">
    <text evidence="1">Belongs to the universal ribosomal protein uL24 family.</text>
</comment>
<reference key="1">
    <citation type="journal article" date="2004" name="Proc. Natl. Acad. Sci. U.S.A.">
        <title>Genome sequence of the enterobacterial phytopathogen Erwinia carotovora subsp. atroseptica and characterization of virulence factors.</title>
        <authorList>
            <person name="Bell K.S."/>
            <person name="Sebaihia M."/>
            <person name="Pritchard L."/>
            <person name="Holden M.T.G."/>
            <person name="Hyman L.J."/>
            <person name="Holeva M.C."/>
            <person name="Thomson N.R."/>
            <person name="Bentley S.D."/>
            <person name="Churcher L.J.C."/>
            <person name="Mungall K."/>
            <person name="Atkin R."/>
            <person name="Bason N."/>
            <person name="Brooks K."/>
            <person name="Chillingworth T."/>
            <person name="Clark K."/>
            <person name="Doggett J."/>
            <person name="Fraser A."/>
            <person name="Hance Z."/>
            <person name="Hauser H."/>
            <person name="Jagels K."/>
            <person name="Moule S."/>
            <person name="Norbertczak H."/>
            <person name="Ormond D."/>
            <person name="Price C."/>
            <person name="Quail M.A."/>
            <person name="Sanders M."/>
            <person name="Walker D."/>
            <person name="Whitehead S."/>
            <person name="Salmond G.P.C."/>
            <person name="Birch P.R.J."/>
            <person name="Parkhill J."/>
            <person name="Toth I.K."/>
        </authorList>
    </citation>
    <scope>NUCLEOTIDE SEQUENCE [LARGE SCALE GENOMIC DNA]</scope>
    <source>
        <strain>SCRI 1043 / ATCC BAA-672</strain>
    </source>
</reference>
<protein>
    <recommendedName>
        <fullName evidence="1">Large ribosomal subunit protein uL24</fullName>
    </recommendedName>
    <alternativeName>
        <fullName evidence="2">50S ribosomal protein L24</fullName>
    </alternativeName>
</protein>